<protein>
    <recommendedName>
        <fullName evidence="2">Translation initiation factor IF-2</fullName>
    </recommendedName>
</protein>
<accession>B7HLE6</accession>
<dbReference type="EMBL" id="CP001177">
    <property type="protein sequence ID" value="ACJ80920.1"/>
    <property type="molecule type" value="Genomic_DNA"/>
</dbReference>
<dbReference type="SMR" id="B7HLE6"/>
<dbReference type="KEGG" id="bcr:BCAH187_A3860"/>
<dbReference type="HOGENOM" id="CLU_006301_5_1_9"/>
<dbReference type="Proteomes" id="UP000002214">
    <property type="component" value="Chromosome"/>
</dbReference>
<dbReference type="GO" id="GO:0005829">
    <property type="term" value="C:cytosol"/>
    <property type="evidence" value="ECO:0007669"/>
    <property type="project" value="TreeGrafter"/>
</dbReference>
<dbReference type="GO" id="GO:0005525">
    <property type="term" value="F:GTP binding"/>
    <property type="evidence" value="ECO:0007669"/>
    <property type="project" value="UniProtKB-KW"/>
</dbReference>
<dbReference type="GO" id="GO:0003924">
    <property type="term" value="F:GTPase activity"/>
    <property type="evidence" value="ECO:0007669"/>
    <property type="project" value="UniProtKB-UniRule"/>
</dbReference>
<dbReference type="GO" id="GO:0003743">
    <property type="term" value="F:translation initiation factor activity"/>
    <property type="evidence" value="ECO:0007669"/>
    <property type="project" value="UniProtKB-UniRule"/>
</dbReference>
<dbReference type="CDD" id="cd01887">
    <property type="entry name" value="IF2_eIF5B"/>
    <property type="match status" value="1"/>
</dbReference>
<dbReference type="CDD" id="cd03702">
    <property type="entry name" value="IF2_mtIF2_II"/>
    <property type="match status" value="1"/>
</dbReference>
<dbReference type="CDD" id="cd03692">
    <property type="entry name" value="mtIF2_IVc"/>
    <property type="match status" value="1"/>
</dbReference>
<dbReference type="FunFam" id="1.10.10.2480:FF:000001">
    <property type="entry name" value="Translation initiation factor IF-2"/>
    <property type="match status" value="1"/>
</dbReference>
<dbReference type="FunFam" id="2.40.30.10:FF:000007">
    <property type="entry name" value="Translation initiation factor IF-2"/>
    <property type="match status" value="1"/>
</dbReference>
<dbReference type="FunFam" id="2.40.30.10:FF:000008">
    <property type="entry name" value="Translation initiation factor IF-2"/>
    <property type="match status" value="1"/>
</dbReference>
<dbReference type="FunFam" id="3.40.50.10050:FF:000001">
    <property type="entry name" value="Translation initiation factor IF-2"/>
    <property type="match status" value="1"/>
</dbReference>
<dbReference type="FunFam" id="3.40.50.300:FF:000019">
    <property type="entry name" value="Translation initiation factor IF-2"/>
    <property type="match status" value="1"/>
</dbReference>
<dbReference type="Gene3D" id="1.10.10.2480">
    <property type="match status" value="1"/>
</dbReference>
<dbReference type="Gene3D" id="3.40.50.300">
    <property type="entry name" value="P-loop containing nucleotide triphosphate hydrolases"/>
    <property type="match status" value="1"/>
</dbReference>
<dbReference type="Gene3D" id="2.40.30.10">
    <property type="entry name" value="Translation factors"/>
    <property type="match status" value="2"/>
</dbReference>
<dbReference type="Gene3D" id="3.40.50.10050">
    <property type="entry name" value="Translation initiation factor IF- 2, domain 3"/>
    <property type="match status" value="1"/>
</dbReference>
<dbReference type="HAMAP" id="MF_00100_B">
    <property type="entry name" value="IF_2_B"/>
    <property type="match status" value="1"/>
</dbReference>
<dbReference type="InterPro" id="IPR053905">
    <property type="entry name" value="EF-G-like_DII"/>
</dbReference>
<dbReference type="InterPro" id="IPR044145">
    <property type="entry name" value="IF2_II"/>
</dbReference>
<dbReference type="InterPro" id="IPR006847">
    <property type="entry name" value="IF2_N"/>
</dbReference>
<dbReference type="InterPro" id="IPR027417">
    <property type="entry name" value="P-loop_NTPase"/>
</dbReference>
<dbReference type="InterPro" id="IPR005225">
    <property type="entry name" value="Small_GTP-bd"/>
</dbReference>
<dbReference type="InterPro" id="IPR000795">
    <property type="entry name" value="T_Tr_GTP-bd_dom"/>
</dbReference>
<dbReference type="InterPro" id="IPR000178">
    <property type="entry name" value="TF_IF2_bacterial-like"/>
</dbReference>
<dbReference type="InterPro" id="IPR015760">
    <property type="entry name" value="TIF_IF2"/>
</dbReference>
<dbReference type="InterPro" id="IPR023115">
    <property type="entry name" value="TIF_IF2_dom3"/>
</dbReference>
<dbReference type="InterPro" id="IPR036925">
    <property type="entry name" value="TIF_IF2_dom3_sf"/>
</dbReference>
<dbReference type="InterPro" id="IPR009000">
    <property type="entry name" value="Transl_B-barrel_sf"/>
</dbReference>
<dbReference type="NCBIfam" id="TIGR00487">
    <property type="entry name" value="IF-2"/>
    <property type="match status" value="1"/>
</dbReference>
<dbReference type="NCBIfam" id="TIGR00231">
    <property type="entry name" value="small_GTP"/>
    <property type="match status" value="1"/>
</dbReference>
<dbReference type="PANTHER" id="PTHR43381:SF5">
    <property type="entry name" value="TR-TYPE G DOMAIN-CONTAINING PROTEIN"/>
    <property type="match status" value="1"/>
</dbReference>
<dbReference type="PANTHER" id="PTHR43381">
    <property type="entry name" value="TRANSLATION INITIATION FACTOR IF-2-RELATED"/>
    <property type="match status" value="1"/>
</dbReference>
<dbReference type="Pfam" id="PF22042">
    <property type="entry name" value="EF-G_D2"/>
    <property type="match status" value="1"/>
</dbReference>
<dbReference type="Pfam" id="PF00009">
    <property type="entry name" value="GTP_EFTU"/>
    <property type="match status" value="1"/>
</dbReference>
<dbReference type="Pfam" id="PF11987">
    <property type="entry name" value="IF-2"/>
    <property type="match status" value="1"/>
</dbReference>
<dbReference type="Pfam" id="PF04760">
    <property type="entry name" value="IF2_N"/>
    <property type="match status" value="2"/>
</dbReference>
<dbReference type="SUPFAM" id="SSF52156">
    <property type="entry name" value="Initiation factor IF2/eIF5b, domain 3"/>
    <property type="match status" value="1"/>
</dbReference>
<dbReference type="SUPFAM" id="SSF52540">
    <property type="entry name" value="P-loop containing nucleoside triphosphate hydrolases"/>
    <property type="match status" value="1"/>
</dbReference>
<dbReference type="SUPFAM" id="SSF50447">
    <property type="entry name" value="Translation proteins"/>
    <property type="match status" value="2"/>
</dbReference>
<dbReference type="PROSITE" id="PS51722">
    <property type="entry name" value="G_TR_2"/>
    <property type="match status" value="1"/>
</dbReference>
<dbReference type="PROSITE" id="PS01176">
    <property type="entry name" value="IF2"/>
    <property type="match status" value="1"/>
</dbReference>
<sequence>MSKIRVHEYAKKHNISSKDLMTKLKEMNIEVSNHMTMLDDEVVNKLDNEYQAEKPSVADEFEVEEKVVRSKKNSNKKKKKGKGNEDKRQENFAGRQQTQTVETPDKITFSGSLTVGDLAKKLSKEPSEIIKKLFMLGIMATINQDLDKDTIELIANDYGIEVEEEVIVSETEFETFIDEQDDEENLKERPAVVTIMGHVDHGKTTLLDSIRNSKVTAGEAGGITQHIGAYQVEVNDKKITFLDTPGHAAFTTMRARGAQVTDITILVVAADDGVMPQTVEAINHAKAAGVPIIVAVNKMDKPAANPDRVMQELTEYELVPEAWGGDTIFVPISAIQGEGIDNLLEMILLVSEVEEYKANPNRYATGTVIEAQLDKGKGTIATLLVQNGTLRVGDPIVVGTTFGRVRAMVSDIGRRVKVAGPSTPVEITGLNEVPQAGDRFMAFADEKKARQIGESRAQEALLAQRGEKSKLSLEDLFQQIQEGDVKEINLIVKADVQGSVEAMAASLRKIDVEGVKVKIIHTGVGAITESDIILASASNAIVIGFNVRPDVNAKRTAELENVDIRLHRIIYKVIEEIEAAMQGMLDPEFEEKVIGQAEVRQTFKVTKVGTIAGCYVTDGKITRDSGVRIIRDGVVIYEGQLDTLKRFKDDVKEVAQNYECGITIEKYNDLKEGDIIEAYIMEEVKR</sequence>
<evidence type="ECO:0000250" key="1"/>
<evidence type="ECO:0000255" key="2">
    <source>
        <dbReference type="HAMAP-Rule" id="MF_00100"/>
    </source>
</evidence>
<evidence type="ECO:0000256" key="3">
    <source>
        <dbReference type="SAM" id="MobiDB-lite"/>
    </source>
</evidence>
<name>IF2_BACC7</name>
<organism>
    <name type="scientific">Bacillus cereus (strain AH187)</name>
    <dbReference type="NCBI Taxonomy" id="405534"/>
    <lineage>
        <taxon>Bacteria</taxon>
        <taxon>Bacillati</taxon>
        <taxon>Bacillota</taxon>
        <taxon>Bacilli</taxon>
        <taxon>Bacillales</taxon>
        <taxon>Bacillaceae</taxon>
        <taxon>Bacillus</taxon>
        <taxon>Bacillus cereus group</taxon>
    </lineage>
</organism>
<reference key="1">
    <citation type="submission" date="2008-10" db="EMBL/GenBank/DDBJ databases">
        <title>Genome sequence of Bacillus cereus AH187.</title>
        <authorList>
            <person name="Dodson R.J."/>
            <person name="Durkin A.S."/>
            <person name="Rosovitz M.J."/>
            <person name="Rasko D.A."/>
            <person name="Kolsto A.B."/>
            <person name="Okstad O.A."/>
            <person name="Ravel J."/>
            <person name="Sutton G."/>
        </authorList>
    </citation>
    <scope>NUCLEOTIDE SEQUENCE [LARGE SCALE GENOMIC DNA]</scope>
    <source>
        <strain>AH187</strain>
    </source>
</reference>
<keyword id="KW-0963">Cytoplasm</keyword>
<keyword id="KW-0342">GTP-binding</keyword>
<keyword id="KW-0396">Initiation factor</keyword>
<keyword id="KW-0547">Nucleotide-binding</keyword>
<keyword id="KW-0648">Protein biosynthesis</keyword>
<proteinExistence type="inferred from homology"/>
<comment type="function">
    <text evidence="2">One of the essential components for the initiation of protein synthesis. Protects formylmethionyl-tRNA from spontaneous hydrolysis and promotes its binding to the 30S ribosomal subunits. Also involved in the hydrolysis of GTP during the formation of the 70S ribosomal complex.</text>
</comment>
<comment type="subcellular location">
    <subcellularLocation>
        <location evidence="2">Cytoplasm</location>
    </subcellularLocation>
</comment>
<comment type="similarity">
    <text evidence="2">Belongs to the TRAFAC class translation factor GTPase superfamily. Classic translation factor GTPase family. IF-2 subfamily.</text>
</comment>
<gene>
    <name evidence="2" type="primary">infB</name>
    <name type="ordered locus">BCAH187_A3860</name>
</gene>
<feature type="chain" id="PRO_1000117323" description="Translation initiation factor IF-2">
    <location>
        <begin position="1"/>
        <end position="686"/>
    </location>
</feature>
<feature type="domain" description="tr-type G">
    <location>
        <begin position="188"/>
        <end position="357"/>
    </location>
</feature>
<feature type="region of interest" description="Disordered" evidence="3">
    <location>
        <begin position="54"/>
        <end position="105"/>
    </location>
</feature>
<feature type="region of interest" description="G1" evidence="1">
    <location>
        <begin position="197"/>
        <end position="204"/>
    </location>
</feature>
<feature type="region of interest" description="G2" evidence="1">
    <location>
        <begin position="222"/>
        <end position="226"/>
    </location>
</feature>
<feature type="region of interest" description="G3" evidence="1">
    <location>
        <begin position="243"/>
        <end position="246"/>
    </location>
</feature>
<feature type="region of interest" description="G4" evidence="1">
    <location>
        <begin position="297"/>
        <end position="300"/>
    </location>
</feature>
<feature type="region of interest" description="G5" evidence="1">
    <location>
        <begin position="333"/>
        <end position="335"/>
    </location>
</feature>
<feature type="compositionally biased region" description="Basic residues" evidence="3">
    <location>
        <begin position="69"/>
        <end position="81"/>
    </location>
</feature>
<feature type="binding site" evidence="2">
    <location>
        <begin position="197"/>
        <end position="204"/>
    </location>
    <ligand>
        <name>GTP</name>
        <dbReference type="ChEBI" id="CHEBI:37565"/>
    </ligand>
</feature>
<feature type="binding site" evidence="2">
    <location>
        <begin position="243"/>
        <end position="247"/>
    </location>
    <ligand>
        <name>GTP</name>
        <dbReference type="ChEBI" id="CHEBI:37565"/>
    </ligand>
</feature>
<feature type="binding site" evidence="2">
    <location>
        <begin position="297"/>
        <end position="300"/>
    </location>
    <ligand>
        <name>GTP</name>
        <dbReference type="ChEBI" id="CHEBI:37565"/>
    </ligand>
</feature>